<keyword id="KW-0010">Activator</keyword>
<keyword id="KW-0238">DNA-binding</keyword>
<keyword id="KW-0479">Metal-binding</keyword>
<keyword id="KW-0539">Nucleus</keyword>
<keyword id="KW-1185">Reference proteome</keyword>
<keyword id="KW-0677">Repeat</keyword>
<keyword id="KW-0804">Transcription</keyword>
<keyword id="KW-0805">Transcription regulation</keyword>
<keyword id="KW-0862">Zinc</keyword>
<keyword id="KW-0863">Zinc-finger</keyword>
<protein>
    <recommendedName>
        <fullName>Transcription factor GATA-4</fullName>
    </recommendedName>
    <alternativeName>
        <fullName>GATA-binding factor 4</fullName>
        <shortName>xGATA-4</shortName>
    </alternativeName>
</protein>
<proteinExistence type="evidence at transcript level"/>
<dbReference type="EMBL" id="U45453">
    <property type="protein sequence ID" value="AAB05647.1"/>
    <property type="molecule type" value="mRNA"/>
</dbReference>
<dbReference type="RefSeq" id="NP_001084098.1">
    <property type="nucleotide sequence ID" value="NM_001090629.1"/>
</dbReference>
<dbReference type="SMR" id="Q91677"/>
<dbReference type="DNASU" id="399302"/>
<dbReference type="GeneID" id="399302"/>
<dbReference type="KEGG" id="xla:399302"/>
<dbReference type="AGR" id="Xenbase:XB-GENE-6256576"/>
<dbReference type="CTD" id="399302"/>
<dbReference type="Xenbase" id="XB-GENE-6256576">
    <property type="gene designation" value="gata4.S"/>
</dbReference>
<dbReference type="OrthoDB" id="515401at2759"/>
<dbReference type="Proteomes" id="UP000186698">
    <property type="component" value="Chromosome 5S"/>
</dbReference>
<dbReference type="Bgee" id="399302">
    <property type="expression patterns" value="Expressed in heart and 7 other cell types or tissues"/>
</dbReference>
<dbReference type="GO" id="GO:0005634">
    <property type="term" value="C:nucleus"/>
    <property type="evidence" value="ECO:0000314"/>
    <property type="project" value="MGI"/>
</dbReference>
<dbReference type="GO" id="GO:0003677">
    <property type="term" value="F:DNA binding"/>
    <property type="evidence" value="ECO:0000250"/>
    <property type="project" value="UniProtKB"/>
</dbReference>
<dbReference type="GO" id="GO:0000981">
    <property type="term" value="F:DNA-binding transcription factor activity, RNA polymerase II-specific"/>
    <property type="evidence" value="ECO:0000318"/>
    <property type="project" value="GO_Central"/>
</dbReference>
<dbReference type="GO" id="GO:0000978">
    <property type="term" value="F:RNA polymerase II cis-regulatory region sequence-specific DNA binding"/>
    <property type="evidence" value="ECO:0000318"/>
    <property type="project" value="GO_Central"/>
</dbReference>
<dbReference type="GO" id="GO:0000976">
    <property type="term" value="F:transcription cis-regulatory region binding"/>
    <property type="evidence" value="ECO:0000314"/>
    <property type="project" value="MGI"/>
</dbReference>
<dbReference type="GO" id="GO:0008270">
    <property type="term" value="F:zinc ion binding"/>
    <property type="evidence" value="ECO:0007669"/>
    <property type="project" value="UniProtKB-KW"/>
</dbReference>
<dbReference type="GO" id="GO:0060070">
    <property type="term" value="P:canonical Wnt signaling pathway"/>
    <property type="evidence" value="ECO:0000315"/>
    <property type="project" value="BHF-UCL"/>
</dbReference>
<dbReference type="GO" id="GO:0048738">
    <property type="term" value="P:cardiac muscle tissue development"/>
    <property type="evidence" value="ECO:0000315"/>
    <property type="project" value="BHF-UCL"/>
</dbReference>
<dbReference type="GO" id="GO:0045165">
    <property type="term" value="P:cell fate commitment"/>
    <property type="evidence" value="ECO:0000318"/>
    <property type="project" value="GO_Central"/>
</dbReference>
<dbReference type="GO" id="GO:0000122">
    <property type="term" value="P:negative regulation of transcription by RNA polymerase II"/>
    <property type="evidence" value="ECO:0000318"/>
    <property type="project" value="GO_Central"/>
</dbReference>
<dbReference type="GO" id="GO:0045893">
    <property type="term" value="P:positive regulation of DNA-templated transcription"/>
    <property type="evidence" value="ECO:0000250"/>
    <property type="project" value="UniProtKB"/>
</dbReference>
<dbReference type="GO" id="GO:0045944">
    <property type="term" value="P:positive regulation of transcription by RNA polymerase II"/>
    <property type="evidence" value="ECO:0000314"/>
    <property type="project" value="MGI"/>
</dbReference>
<dbReference type="CDD" id="cd00202">
    <property type="entry name" value="ZnF_GATA"/>
    <property type="match status" value="2"/>
</dbReference>
<dbReference type="FunFam" id="3.30.50.10:FF:000001">
    <property type="entry name" value="GATA transcription factor (GATAd)"/>
    <property type="match status" value="1"/>
</dbReference>
<dbReference type="FunFam" id="3.30.50.10:FF:000032">
    <property type="entry name" value="Transcription factor GATA-3"/>
    <property type="match status" value="1"/>
</dbReference>
<dbReference type="Gene3D" id="3.30.50.10">
    <property type="entry name" value="Erythroid Transcription Factor GATA-1, subunit A"/>
    <property type="match status" value="2"/>
</dbReference>
<dbReference type="InterPro" id="IPR008013">
    <property type="entry name" value="GATA_N"/>
</dbReference>
<dbReference type="InterPro" id="IPR016375">
    <property type="entry name" value="TF_GATA_4/5/6"/>
</dbReference>
<dbReference type="InterPro" id="IPR039355">
    <property type="entry name" value="Transcription_factor_GATA"/>
</dbReference>
<dbReference type="InterPro" id="IPR000679">
    <property type="entry name" value="Znf_GATA"/>
</dbReference>
<dbReference type="InterPro" id="IPR013088">
    <property type="entry name" value="Znf_NHR/GATA"/>
</dbReference>
<dbReference type="PANTHER" id="PTHR10071">
    <property type="entry name" value="TRANSCRIPTION FACTOR GATA FAMILY MEMBER"/>
    <property type="match status" value="1"/>
</dbReference>
<dbReference type="PANTHER" id="PTHR10071:SF154">
    <property type="entry name" value="TRANSCRIPTION FACTOR GATA-4"/>
    <property type="match status" value="1"/>
</dbReference>
<dbReference type="Pfam" id="PF00320">
    <property type="entry name" value="GATA"/>
    <property type="match status" value="2"/>
</dbReference>
<dbReference type="Pfam" id="PF05349">
    <property type="entry name" value="GATA-N"/>
    <property type="match status" value="1"/>
</dbReference>
<dbReference type="PIRSF" id="PIRSF003028">
    <property type="entry name" value="TF_GATA_4/5/6"/>
    <property type="match status" value="1"/>
</dbReference>
<dbReference type="PRINTS" id="PR00619">
    <property type="entry name" value="GATAZNFINGER"/>
</dbReference>
<dbReference type="SMART" id="SM00401">
    <property type="entry name" value="ZnF_GATA"/>
    <property type="match status" value="2"/>
</dbReference>
<dbReference type="SUPFAM" id="SSF57716">
    <property type="entry name" value="Glucocorticoid receptor-like (DNA-binding domain)"/>
    <property type="match status" value="2"/>
</dbReference>
<dbReference type="PROSITE" id="PS00344">
    <property type="entry name" value="GATA_ZN_FINGER_1"/>
    <property type="match status" value="2"/>
</dbReference>
<dbReference type="PROSITE" id="PS50114">
    <property type="entry name" value="GATA_ZN_FINGER_2"/>
    <property type="match status" value="2"/>
</dbReference>
<comment type="function">
    <text evidence="4">Transcriptional activator that binds to the consensus sequence 5'-AGATAG-3'. Associated with cardiac specification and can regulate cardiac-specific transcription during embryogenesis. Activates the expression of cardiac MHC-alpha in vivo.</text>
</comment>
<comment type="subcellular location">
    <subcellularLocation>
        <location evidence="1">Nucleus</location>
    </subcellularLocation>
</comment>
<comment type="tissue specificity">
    <text>Expressed at high levels in heart, small intestine, stomach, ovary, and liver. Found at much lower levels in lung, spleen, pancreas and skin.</text>
</comment>
<comment type="developmental stage">
    <text>Expressed in cardiac progenitors during embryogenesis and up-regulated during gastrulation.</text>
</comment>
<accession>Q91677</accession>
<sequence length="392" mass="42353">MYQSIAMATNHGPSGYEGTGSFMHSATAATSPVYVPTTRVSSMIHSLPYLQTSGSSQQGSPVSGHNMWAQAGVESSAYNPGTSHPPVSPRFTFSSSPPITAPSSREVSYSSPLGISANGREQYSRGLGATYASPYPAYMSPDMGAAWTASPFDSSMLHNLQNRAVTSRHPNIEFFDDFSEGRECVNCGAMSTPLWRRDGTGHYLCNACGLYHKMNGINRPLIKPQRRLSASRRVGLSCANCHTTTTTLWRRNAEGEPVCNACGLYMKLHGVPRPLAMKKEGIQTRKRKPKNLSKSKTLTGQSGSDSLTPSTSSTNSMGEEMRPIKIEPGLSPPYDHSNSISQASALSTITSHGSSYYPMPSLKLSPQNHHSTFNPSPQANSKHDSWNNLVLA</sequence>
<feature type="chain" id="PRO_0000083417" description="Transcription factor GATA-4">
    <location>
        <begin position="1"/>
        <end position="392"/>
    </location>
</feature>
<feature type="zinc finger region" description="GATA-type 1" evidence="2">
    <location>
        <begin position="184"/>
        <end position="208"/>
    </location>
</feature>
<feature type="zinc finger region" description="GATA-type 2" evidence="2">
    <location>
        <begin position="238"/>
        <end position="262"/>
    </location>
</feature>
<feature type="region of interest" description="Disordered" evidence="3">
    <location>
        <begin position="75"/>
        <end position="113"/>
    </location>
</feature>
<feature type="region of interest" description="Disordered" evidence="3">
    <location>
        <begin position="279"/>
        <end position="339"/>
    </location>
</feature>
<feature type="region of interest" description="Disordered" evidence="3">
    <location>
        <begin position="359"/>
        <end position="392"/>
    </location>
</feature>
<feature type="compositionally biased region" description="Polar residues" evidence="3">
    <location>
        <begin position="91"/>
        <end position="113"/>
    </location>
</feature>
<feature type="compositionally biased region" description="Basic residues" evidence="3">
    <location>
        <begin position="284"/>
        <end position="293"/>
    </location>
</feature>
<feature type="compositionally biased region" description="Low complexity" evidence="3">
    <location>
        <begin position="302"/>
        <end position="316"/>
    </location>
</feature>
<feature type="compositionally biased region" description="Polar residues" evidence="3">
    <location>
        <begin position="364"/>
        <end position="380"/>
    </location>
</feature>
<evidence type="ECO:0000250" key="1">
    <source>
        <dbReference type="UniProtKB" id="P43694"/>
    </source>
</evidence>
<evidence type="ECO:0000255" key="2">
    <source>
        <dbReference type="PROSITE-ProRule" id="PRU00094"/>
    </source>
</evidence>
<evidence type="ECO:0000256" key="3">
    <source>
        <dbReference type="SAM" id="MobiDB-lite"/>
    </source>
</evidence>
<evidence type="ECO:0000269" key="4">
    <source>
    </source>
</evidence>
<reference key="1">
    <citation type="journal article" date="1996" name="Dev. Biol.">
        <title>The Xenopus GATA-4/5/6 genes are associated with cardiac specification and can regulate cardiac-specific transcription during embryogenesis.</title>
        <authorList>
            <person name="Jiang Y."/>
            <person name="Evans T."/>
        </authorList>
    </citation>
    <scope>NUCLEOTIDE SEQUENCE [MRNA]</scope>
    <scope>FUNCTION</scope>
    <source>
        <tissue>Heart</tissue>
        <tissue>Intestine</tissue>
    </source>
</reference>
<organism>
    <name type="scientific">Xenopus laevis</name>
    <name type="common">African clawed frog</name>
    <dbReference type="NCBI Taxonomy" id="8355"/>
    <lineage>
        <taxon>Eukaryota</taxon>
        <taxon>Metazoa</taxon>
        <taxon>Chordata</taxon>
        <taxon>Craniata</taxon>
        <taxon>Vertebrata</taxon>
        <taxon>Euteleostomi</taxon>
        <taxon>Amphibia</taxon>
        <taxon>Batrachia</taxon>
        <taxon>Anura</taxon>
        <taxon>Pipoidea</taxon>
        <taxon>Pipidae</taxon>
        <taxon>Xenopodinae</taxon>
        <taxon>Xenopus</taxon>
        <taxon>Xenopus</taxon>
    </lineage>
</organism>
<gene>
    <name type="primary">gata4</name>
</gene>
<name>GATA4_XENLA</name>